<sequence>MPTLKDIRVRIKGVKSTQQVTKAMKMVAAAKLRRAQERAVMARPYAKKLKEMLGSLSAKVDTSRNPMLSGRSEVNKVLVILVTADRGLCGAFNTNAIKLASKIIHEDYPAIHSKGGVSLICAGSRGFDFFRKREYNIVKGYSAVFQHLDFSTAKEIADIASGMYLRGEVDRVLVAYNEFKSVLAPNLREEVILPIAPEIPGTESSSDYIYEPSPSAIIDELVPKHLNTQIWRMMLESSAAEQAARMSAMDSATENAKELMRTLNISYNRARQAAITTELSEIVSGADALTN</sequence>
<keyword id="KW-0066">ATP synthesis</keyword>
<keyword id="KW-0997">Cell inner membrane</keyword>
<keyword id="KW-1003">Cell membrane</keyword>
<keyword id="KW-0139">CF(1)</keyword>
<keyword id="KW-0375">Hydrogen ion transport</keyword>
<keyword id="KW-0406">Ion transport</keyword>
<keyword id="KW-0472">Membrane</keyword>
<keyword id="KW-1185">Reference proteome</keyword>
<keyword id="KW-0813">Transport</keyword>
<proteinExistence type="inferred from homology"/>
<evidence type="ECO:0000255" key="1">
    <source>
        <dbReference type="HAMAP-Rule" id="MF_00815"/>
    </source>
</evidence>
<organism>
    <name type="scientific">Pelodictyon phaeoclathratiforme (strain DSM 5477 / BU-1)</name>
    <dbReference type="NCBI Taxonomy" id="324925"/>
    <lineage>
        <taxon>Bacteria</taxon>
        <taxon>Pseudomonadati</taxon>
        <taxon>Chlorobiota</taxon>
        <taxon>Chlorobiia</taxon>
        <taxon>Chlorobiales</taxon>
        <taxon>Chlorobiaceae</taxon>
        <taxon>Chlorobium/Pelodictyon group</taxon>
        <taxon>Pelodictyon</taxon>
    </lineage>
</organism>
<gene>
    <name evidence="1" type="primary">atpG</name>
    <name type="ordered locus">Ppha_2704</name>
</gene>
<feature type="chain" id="PRO_1000134185" description="ATP synthase gamma chain">
    <location>
        <begin position="1"/>
        <end position="291"/>
    </location>
</feature>
<reference key="1">
    <citation type="submission" date="2008-06" db="EMBL/GenBank/DDBJ databases">
        <title>Complete sequence of Pelodictyon phaeoclathratiforme BU-1.</title>
        <authorList>
            <consortium name="US DOE Joint Genome Institute"/>
            <person name="Lucas S."/>
            <person name="Copeland A."/>
            <person name="Lapidus A."/>
            <person name="Glavina del Rio T."/>
            <person name="Dalin E."/>
            <person name="Tice H."/>
            <person name="Bruce D."/>
            <person name="Goodwin L."/>
            <person name="Pitluck S."/>
            <person name="Schmutz J."/>
            <person name="Larimer F."/>
            <person name="Land M."/>
            <person name="Hauser L."/>
            <person name="Kyrpides N."/>
            <person name="Mikhailova N."/>
            <person name="Liu Z."/>
            <person name="Li T."/>
            <person name="Zhao F."/>
            <person name="Overmann J."/>
            <person name="Bryant D.A."/>
            <person name="Richardson P."/>
        </authorList>
    </citation>
    <scope>NUCLEOTIDE SEQUENCE [LARGE SCALE GENOMIC DNA]</scope>
    <source>
        <strain>DSM 5477 / BU-1</strain>
    </source>
</reference>
<name>ATPG_PELPB</name>
<dbReference type="EMBL" id="CP001110">
    <property type="protein sequence ID" value="ACF44862.1"/>
    <property type="molecule type" value="Genomic_DNA"/>
</dbReference>
<dbReference type="RefSeq" id="WP_012509334.1">
    <property type="nucleotide sequence ID" value="NC_011060.1"/>
</dbReference>
<dbReference type="SMR" id="B4SGC6"/>
<dbReference type="STRING" id="324925.Ppha_2704"/>
<dbReference type="KEGG" id="pph:Ppha_2704"/>
<dbReference type="eggNOG" id="COG0224">
    <property type="taxonomic scope" value="Bacteria"/>
</dbReference>
<dbReference type="HOGENOM" id="CLU_050669_0_1_10"/>
<dbReference type="OrthoDB" id="9812769at2"/>
<dbReference type="Proteomes" id="UP000002724">
    <property type="component" value="Chromosome"/>
</dbReference>
<dbReference type="GO" id="GO:0005886">
    <property type="term" value="C:plasma membrane"/>
    <property type="evidence" value="ECO:0007669"/>
    <property type="project" value="UniProtKB-SubCell"/>
</dbReference>
<dbReference type="GO" id="GO:0045259">
    <property type="term" value="C:proton-transporting ATP synthase complex"/>
    <property type="evidence" value="ECO:0007669"/>
    <property type="project" value="UniProtKB-KW"/>
</dbReference>
<dbReference type="GO" id="GO:0005524">
    <property type="term" value="F:ATP binding"/>
    <property type="evidence" value="ECO:0007669"/>
    <property type="project" value="UniProtKB-UniRule"/>
</dbReference>
<dbReference type="GO" id="GO:0046933">
    <property type="term" value="F:proton-transporting ATP synthase activity, rotational mechanism"/>
    <property type="evidence" value="ECO:0007669"/>
    <property type="project" value="UniProtKB-UniRule"/>
</dbReference>
<dbReference type="GO" id="GO:0042777">
    <property type="term" value="P:proton motive force-driven plasma membrane ATP synthesis"/>
    <property type="evidence" value="ECO:0007669"/>
    <property type="project" value="UniProtKB-UniRule"/>
</dbReference>
<dbReference type="CDD" id="cd12151">
    <property type="entry name" value="F1-ATPase_gamma"/>
    <property type="match status" value="1"/>
</dbReference>
<dbReference type="FunFam" id="1.10.287.80:FF:000003">
    <property type="entry name" value="ATP synthase gamma chain, chloroplastic"/>
    <property type="match status" value="1"/>
</dbReference>
<dbReference type="Gene3D" id="3.40.1380.10">
    <property type="match status" value="1"/>
</dbReference>
<dbReference type="Gene3D" id="1.10.287.80">
    <property type="entry name" value="ATP synthase, gamma subunit, helix hairpin domain"/>
    <property type="match status" value="1"/>
</dbReference>
<dbReference type="HAMAP" id="MF_00815">
    <property type="entry name" value="ATP_synth_gamma_bact"/>
    <property type="match status" value="1"/>
</dbReference>
<dbReference type="InterPro" id="IPR035968">
    <property type="entry name" value="ATP_synth_F1_ATPase_gsu"/>
</dbReference>
<dbReference type="InterPro" id="IPR000131">
    <property type="entry name" value="ATP_synth_F1_gsu"/>
</dbReference>
<dbReference type="InterPro" id="IPR023632">
    <property type="entry name" value="ATP_synth_F1_gsu_CS"/>
</dbReference>
<dbReference type="NCBIfam" id="TIGR01146">
    <property type="entry name" value="ATPsyn_F1gamma"/>
    <property type="match status" value="1"/>
</dbReference>
<dbReference type="NCBIfam" id="NF009958">
    <property type="entry name" value="PRK13425.1"/>
    <property type="match status" value="1"/>
</dbReference>
<dbReference type="PANTHER" id="PTHR11693">
    <property type="entry name" value="ATP SYNTHASE GAMMA CHAIN"/>
    <property type="match status" value="1"/>
</dbReference>
<dbReference type="PANTHER" id="PTHR11693:SF22">
    <property type="entry name" value="ATP SYNTHASE SUBUNIT GAMMA, MITOCHONDRIAL"/>
    <property type="match status" value="1"/>
</dbReference>
<dbReference type="Pfam" id="PF00231">
    <property type="entry name" value="ATP-synt"/>
    <property type="match status" value="1"/>
</dbReference>
<dbReference type="PRINTS" id="PR00126">
    <property type="entry name" value="ATPASEGAMMA"/>
</dbReference>
<dbReference type="SUPFAM" id="SSF52943">
    <property type="entry name" value="ATP synthase (F1-ATPase), gamma subunit"/>
    <property type="match status" value="1"/>
</dbReference>
<dbReference type="PROSITE" id="PS00153">
    <property type="entry name" value="ATPASE_GAMMA"/>
    <property type="match status" value="1"/>
</dbReference>
<accession>B4SGC6</accession>
<protein>
    <recommendedName>
        <fullName evidence="1">ATP synthase gamma chain</fullName>
    </recommendedName>
    <alternativeName>
        <fullName evidence="1">ATP synthase F1 sector gamma subunit</fullName>
    </alternativeName>
    <alternativeName>
        <fullName evidence="1">F-ATPase gamma subunit</fullName>
    </alternativeName>
</protein>
<comment type="function">
    <text evidence="1">Produces ATP from ADP in the presence of a proton gradient across the membrane. The gamma chain is believed to be important in regulating ATPase activity and the flow of protons through the CF(0) complex.</text>
</comment>
<comment type="subunit">
    <text evidence="1">F-type ATPases have 2 components, CF(1) - the catalytic core - and CF(0) - the membrane proton channel. CF(1) has five subunits: alpha(3), beta(3), gamma(1), delta(1), epsilon(1). CF(0) has three main subunits: a, b and c.</text>
</comment>
<comment type="subcellular location">
    <subcellularLocation>
        <location evidence="1">Cell inner membrane</location>
        <topology evidence="1">Peripheral membrane protein</topology>
    </subcellularLocation>
</comment>
<comment type="similarity">
    <text evidence="1">Belongs to the ATPase gamma chain family.</text>
</comment>